<dbReference type="EC" id="2.3.3.13" evidence="1"/>
<dbReference type="EMBL" id="CP000393">
    <property type="protein sequence ID" value="ABG51482.1"/>
    <property type="molecule type" value="Genomic_DNA"/>
</dbReference>
<dbReference type="RefSeq" id="WP_011611850.1">
    <property type="nucleotide sequence ID" value="NC_008312.1"/>
</dbReference>
<dbReference type="SMR" id="Q112U2"/>
<dbReference type="STRING" id="203124.Tery_2253"/>
<dbReference type="KEGG" id="ter:Tery_2253"/>
<dbReference type="eggNOG" id="COG0119">
    <property type="taxonomic scope" value="Bacteria"/>
</dbReference>
<dbReference type="HOGENOM" id="CLU_022158_0_1_3"/>
<dbReference type="OrthoDB" id="9804858at2"/>
<dbReference type="UniPathway" id="UPA00048">
    <property type="reaction ID" value="UER00070"/>
</dbReference>
<dbReference type="GO" id="GO:0005737">
    <property type="term" value="C:cytoplasm"/>
    <property type="evidence" value="ECO:0007669"/>
    <property type="project" value="UniProtKB-SubCell"/>
</dbReference>
<dbReference type="GO" id="GO:0003852">
    <property type="term" value="F:2-isopropylmalate synthase activity"/>
    <property type="evidence" value="ECO:0007669"/>
    <property type="project" value="UniProtKB-UniRule"/>
</dbReference>
<dbReference type="GO" id="GO:0003985">
    <property type="term" value="F:acetyl-CoA C-acetyltransferase activity"/>
    <property type="evidence" value="ECO:0007669"/>
    <property type="project" value="UniProtKB-UniRule"/>
</dbReference>
<dbReference type="GO" id="GO:0030145">
    <property type="term" value="F:manganese ion binding"/>
    <property type="evidence" value="ECO:0007669"/>
    <property type="project" value="UniProtKB-UniRule"/>
</dbReference>
<dbReference type="GO" id="GO:0009098">
    <property type="term" value="P:L-leucine biosynthetic process"/>
    <property type="evidence" value="ECO:0007669"/>
    <property type="project" value="UniProtKB-UniRule"/>
</dbReference>
<dbReference type="CDD" id="cd07940">
    <property type="entry name" value="DRE_TIM_IPMS"/>
    <property type="match status" value="1"/>
</dbReference>
<dbReference type="FunFam" id="1.10.238.260:FF:000001">
    <property type="entry name" value="2-isopropylmalate synthase"/>
    <property type="match status" value="1"/>
</dbReference>
<dbReference type="FunFam" id="3.20.20.70:FF:000010">
    <property type="entry name" value="2-isopropylmalate synthase"/>
    <property type="match status" value="1"/>
</dbReference>
<dbReference type="FunFam" id="3.30.160.270:FF:000001">
    <property type="entry name" value="2-isopropylmalate synthase"/>
    <property type="match status" value="1"/>
</dbReference>
<dbReference type="Gene3D" id="1.10.238.260">
    <property type="match status" value="1"/>
</dbReference>
<dbReference type="Gene3D" id="3.30.160.270">
    <property type="match status" value="1"/>
</dbReference>
<dbReference type="Gene3D" id="3.20.20.70">
    <property type="entry name" value="Aldolase class I"/>
    <property type="match status" value="1"/>
</dbReference>
<dbReference type="HAMAP" id="MF_01025">
    <property type="entry name" value="LeuA_type1"/>
    <property type="match status" value="1"/>
</dbReference>
<dbReference type="InterPro" id="IPR050073">
    <property type="entry name" value="2-IPM_HCS-like"/>
</dbReference>
<dbReference type="InterPro" id="IPR013709">
    <property type="entry name" value="2-isopropylmalate_synth_dimer"/>
</dbReference>
<dbReference type="InterPro" id="IPR002034">
    <property type="entry name" value="AIPM/Hcit_synth_CS"/>
</dbReference>
<dbReference type="InterPro" id="IPR013785">
    <property type="entry name" value="Aldolase_TIM"/>
</dbReference>
<dbReference type="InterPro" id="IPR054691">
    <property type="entry name" value="LeuA/HCS_post-cat"/>
</dbReference>
<dbReference type="InterPro" id="IPR036230">
    <property type="entry name" value="LeuA_allosteric_dom_sf"/>
</dbReference>
<dbReference type="InterPro" id="IPR005671">
    <property type="entry name" value="LeuA_bact_synth"/>
</dbReference>
<dbReference type="InterPro" id="IPR000891">
    <property type="entry name" value="PYR_CT"/>
</dbReference>
<dbReference type="NCBIfam" id="TIGR00973">
    <property type="entry name" value="leuA_bact"/>
    <property type="match status" value="1"/>
</dbReference>
<dbReference type="NCBIfam" id="NF002086">
    <property type="entry name" value="PRK00915.1-3"/>
    <property type="match status" value="1"/>
</dbReference>
<dbReference type="PANTHER" id="PTHR10277:SF9">
    <property type="entry name" value="2-ISOPROPYLMALATE SYNTHASE 1, CHLOROPLASTIC-RELATED"/>
    <property type="match status" value="1"/>
</dbReference>
<dbReference type="PANTHER" id="PTHR10277">
    <property type="entry name" value="HOMOCITRATE SYNTHASE-RELATED"/>
    <property type="match status" value="1"/>
</dbReference>
<dbReference type="Pfam" id="PF22617">
    <property type="entry name" value="HCS_D2"/>
    <property type="match status" value="1"/>
</dbReference>
<dbReference type="Pfam" id="PF00682">
    <property type="entry name" value="HMGL-like"/>
    <property type="match status" value="1"/>
</dbReference>
<dbReference type="Pfam" id="PF08502">
    <property type="entry name" value="LeuA_dimer"/>
    <property type="match status" value="1"/>
</dbReference>
<dbReference type="SMART" id="SM00917">
    <property type="entry name" value="LeuA_dimer"/>
    <property type="match status" value="1"/>
</dbReference>
<dbReference type="SUPFAM" id="SSF110921">
    <property type="entry name" value="2-isopropylmalate synthase LeuA, allosteric (dimerisation) domain"/>
    <property type="match status" value="1"/>
</dbReference>
<dbReference type="SUPFAM" id="SSF51569">
    <property type="entry name" value="Aldolase"/>
    <property type="match status" value="1"/>
</dbReference>
<dbReference type="PROSITE" id="PS00815">
    <property type="entry name" value="AIPM_HOMOCIT_SYNTH_1"/>
    <property type="match status" value="1"/>
</dbReference>
<dbReference type="PROSITE" id="PS00816">
    <property type="entry name" value="AIPM_HOMOCIT_SYNTH_2"/>
    <property type="match status" value="1"/>
</dbReference>
<dbReference type="PROSITE" id="PS50991">
    <property type="entry name" value="PYR_CT"/>
    <property type="match status" value="1"/>
</dbReference>
<protein>
    <recommendedName>
        <fullName evidence="1">2-isopropylmalate synthase</fullName>
        <ecNumber evidence="1">2.3.3.13</ecNumber>
    </recommendedName>
    <alternativeName>
        <fullName evidence="1">Alpha-IPM synthase</fullName>
    </alternativeName>
    <alternativeName>
        <fullName evidence="1">Alpha-isopropylmalate synthase</fullName>
    </alternativeName>
</protein>
<sequence>MITSQDRVIIFDTTLRDGEQSPGATLNIDEKLTIARQLSLLGVDVIEAGFPYASIGDFEAVQKIAEIVGVEGGPTICGLARTTRADIEAAGKALKPAAKARIHTFIATSDIHLAYKLKKTRAEVLEIASEMVAYAKTFVDDVEFSPEDAGRSDPEFLYQVLEKAIAAGATTVNIPDTVGYTTPAEFGGLIRGIKENVPNIDQAIISVHGHNDLGLAVANFLEAVKNGARQLECTINGIGERAGNAALEELVMAFHVRRQYFNPFFGRPPESETPLTNINTRHIYKTSRLVSSLTGMFVQPNKAIVGANAFAHESGIHQDGVLKNKLTYEIMDAQSIGLTDNQIVLGKLSGRHAFQSRLQELGFKLSDEEINKAFIKFKDLADKKKEITDWDLESIVNAEIQQPPELFRLELVQVSCGDRSRPTATVIIRTPNGEELTDAAIGTGPVDAVYKAINRVVNVENDLVEFSVQSVTAGIDAIGEVTIRVRHEGRVYSGHAANTDIIVASAEAYLSALNRLYAVLQRGVEKINLPKDQPTEVVAGS</sequence>
<comment type="function">
    <text evidence="1">Catalyzes the condensation of the acetyl group of acetyl-CoA with 3-methyl-2-oxobutanoate (2-ketoisovalerate) to form 3-carboxy-3-hydroxy-4-methylpentanoate (2-isopropylmalate).</text>
</comment>
<comment type="catalytic activity">
    <reaction evidence="1">
        <text>3-methyl-2-oxobutanoate + acetyl-CoA + H2O = (2S)-2-isopropylmalate + CoA + H(+)</text>
        <dbReference type="Rhea" id="RHEA:21524"/>
        <dbReference type="ChEBI" id="CHEBI:1178"/>
        <dbReference type="ChEBI" id="CHEBI:11851"/>
        <dbReference type="ChEBI" id="CHEBI:15377"/>
        <dbReference type="ChEBI" id="CHEBI:15378"/>
        <dbReference type="ChEBI" id="CHEBI:57287"/>
        <dbReference type="ChEBI" id="CHEBI:57288"/>
        <dbReference type="EC" id="2.3.3.13"/>
    </reaction>
</comment>
<comment type="cofactor">
    <cofactor evidence="1">
        <name>Mn(2+)</name>
        <dbReference type="ChEBI" id="CHEBI:29035"/>
    </cofactor>
</comment>
<comment type="pathway">
    <text evidence="1">Amino-acid biosynthesis; L-leucine biosynthesis; L-leucine from 3-methyl-2-oxobutanoate: step 1/4.</text>
</comment>
<comment type="subunit">
    <text evidence="1">Homodimer.</text>
</comment>
<comment type="subcellular location">
    <subcellularLocation>
        <location evidence="1">Cytoplasm</location>
    </subcellularLocation>
</comment>
<comment type="similarity">
    <text evidence="1">Belongs to the alpha-IPM synthase/homocitrate synthase family. LeuA type 1 subfamily.</text>
</comment>
<organism>
    <name type="scientific">Trichodesmium erythraeum (strain IMS101)</name>
    <dbReference type="NCBI Taxonomy" id="203124"/>
    <lineage>
        <taxon>Bacteria</taxon>
        <taxon>Bacillati</taxon>
        <taxon>Cyanobacteriota</taxon>
        <taxon>Cyanophyceae</taxon>
        <taxon>Oscillatoriophycideae</taxon>
        <taxon>Oscillatoriales</taxon>
        <taxon>Microcoleaceae</taxon>
        <taxon>Trichodesmium</taxon>
    </lineage>
</organism>
<keyword id="KW-0028">Amino-acid biosynthesis</keyword>
<keyword id="KW-0100">Branched-chain amino acid biosynthesis</keyword>
<keyword id="KW-0963">Cytoplasm</keyword>
<keyword id="KW-0432">Leucine biosynthesis</keyword>
<keyword id="KW-0464">Manganese</keyword>
<keyword id="KW-0479">Metal-binding</keyword>
<keyword id="KW-0808">Transferase</keyword>
<name>LEU1_TRIEI</name>
<gene>
    <name evidence="1" type="primary">leuA</name>
    <name type="ordered locus">Tery_2253</name>
</gene>
<accession>Q112U2</accession>
<evidence type="ECO:0000255" key="1">
    <source>
        <dbReference type="HAMAP-Rule" id="MF_01025"/>
    </source>
</evidence>
<proteinExistence type="inferred from homology"/>
<feature type="chain" id="PRO_1000149324" description="2-isopropylmalate synthase">
    <location>
        <begin position="1"/>
        <end position="541"/>
    </location>
</feature>
<feature type="domain" description="Pyruvate carboxyltransferase" evidence="1">
    <location>
        <begin position="8"/>
        <end position="284"/>
    </location>
</feature>
<feature type="region of interest" description="Regulatory domain" evidence="1">
    <location>
        <begin position="408"/>
        <end position="541"/>
    </location>
</feature>
<feature type="binding site" evidence="1">
    <location>
        <position position="17"/>
    </location>
    <ligand>
        <name>Mn(2+)</name>
        <dbReference type="ChEBI" id="CHEBI:29035"/>
    </ligand>
</feature>
<feature type="binding site" evidence="1">
    <location>
        <position position="208"/>
    </location>
    <ligand>
        <name>Mn(2+)</name>
        <dbReference type="ChEBI" id="CHEBI:29035"/>
    </ligand>
</feature>
<feature type="binding site" evidence="1">
    <location>
        <position position="210"/>
    </location>
    <ligand>
        <name>Mn(2+)</name>
        <dbReference type="ChEBI" id="CHEBI:29035"/>
    </ligand>
</feature>
<feature type="binding site" evidence="1">
    <location>
        <position position="244"/>
    </location>
    <ligand>
        <name>Mn(2+)</name>
        <dbReference type="ChEBI" id="CHEBI:29035"/>
    </ligand>
</feature>
<reference key="1">
    <citation type="journal article" date="2015" name="Proc. Natl. Acad. Sci. U.S.A.">
        <title>Trichodesmium genome maintains abundant, widespread noncoding DNA in situ, despite oligotrophic lifestyle.</title>
        <authorList>
            <person name="Walworth N."/>
            <person name="Pfreundt U."/>
            <person name="Nelson W.C."/>
            <person name="Mincer T."/>
            <person name="Heidelberg J.F."/>
            <person name="Fu F."/>
            <person name="Waterbury J.B."/>
            <person name="Glavina del Rio T."/>
            <person name="Goodwin L."/>
            <person name="Kyrpides N.C."/>
            <person name="Land M.L."/>
            <person name="Woyke T."/>
            <person name="Hutchins D.A."/>
            <person name="Hess W.R."/>
            <person name="Webb E.A."/>
        </authorList>
    </citation>
    <scope>NUCLEOTIDE SEQUENCE [LARGE SCALE GENOMIC DNA]</scope>
    <source>
        <strain>IMS101</strain>
    </source>
</reference>